<name>ARSB_STAAU</name>
<accession>P30329</accession>
<proteinExistence type="inferred from homology"/>
<geneLocation type="plasmid">
    <name>pI258</name>
</geneLocation>
<organism>
    <name type="scientific">Staphylococcus aureus</name>
    <dbReference type="NCBI Taxonomy" id="1280"/>
    <lineage>
        <taxon>Bacteria</taxon>
        <taxon>Bacillati</taxon>
        <taxon>Bacillota</taxon>
        <taxon>Bacilli</taxon>
        <taxon>Bacillales</taxon>
        <taxon>Staphylococcaceae</taxon>
        <taxon>Staphylococcus</taxon>
    </lineage>
</organism>
<sequence>MTILAIVIFLLTLTFVIWQPKGLDIGITALIGAVVAIITGVVSLSDVLEVTGIVWNATLTFVAVILISLILDEIGFFEWSAIHMVKASNGNGLKMFVFIMLLGAIVAAFFANDGAALILTPIVLAMVRNLGFNQKVIFPFIIASGFIADTTSLPLIVSNLVNIVSADYFDIGFIEYFSRMIIPNIFSLIASILVLWLYFRKSIPKTFDTENLSDPKSAIKDSKLFKLSWIVLAVLLVGYLVSEFIQIPVSIIAGIIAFIFVILARKSKAVHTKQVIKGAPWNIVVFSIGMYLVVFGLKNVGITTILGDVLTNISNYGLFSSIMGMGFIAAFLSSIMNNMPTVLIDAIAIGQSSATGILKEGMVYANVIGSDLGPKITPIGSLATLLWLHVLTQKGVKISWGTYFKTGIIITIPVLFVTLLGLYLTLIIF</sequence>
<evidence type="ECO:0000255" key="1"/>
<evidence type="ECO:0000305" key="2"/>
<gene>
    <name type="primary">arsB</name>
</gene>
<reference key="1">
    <citation type="journal article" date="1992" name="J. Bacteriol.">
        <title>Regulation and expression of the arsenic resistance operon from Staphylococcus aureus plasmid pI258.</title>
        <authorList>
            <person name="Ji G."/>
            <person name="Silver S."/>
        </authorList>
    </citation>
    <scope>NUCLEOTIDE SEQUENCE [GENOMIC DNA]</scope>
</reference>
<comment type="function">
    <text>Involved in arsenical resistance. Thought to form the channel of an arsenite pump.</text>
</comment>
<comment type="subcellular location">
    <subcellularLocation>
        <location evidence="2">Cell membrane</location>
        <topology evidence="2">Multi-pass membrane protein</topology>
    </subcellularLocation>
</comment>
<comment type="similarity">
    <text evidence="2">Belongs to the ArsB family.</text>
</comment>
<protein>
    <recommendedName>
        <fullName>Arsenical pump membrane protein</fullName>
    </recommendedName>
    <alternativeName>
        <fullName>Arsenic efflux pump protein</fullName>
    </alternativeName>
</protein>
<dbReference type="EMBL" id="M86824">
    <property type="protein sequence ID" value="AAA25637.1"/>
    <property type="molecule type" value="Genomic_DNA"/>
</dbReference>
<dbReference type="PIR" id="C41903">
    <property type="entry name" value="C41903"/>
</dbReference>
<dbReference type="RefSeq" id="YP_006937608.1">
    <property type="nucleotide sequence ID" value="NC_013319.1"/>
</dbReference>
<dbReference type="RefSeq" id="YP_006938162.1">
    <property type="nucleotide sequence ID" value="NC_013333.1"/>
</dbReference>
<dbReference type="RefSeq" id="YP_006938642.1">
    <property type="nucleotide sequence ID" value="NC_013347.1"/>
</dbReference>
<dbReference type="RefSeq" id="YP_006938776.1">
    <property type="nucleotide sequence ID" value="NC_013352.1"/>
</dbReference>
<dbReference type="SMR" id="P30329"/>
<dbReference type="TCDB" id="2.A.45.1.1">
    <property type="family name" value="the arsenite-antimonite (arsb) efflux family"/>
</dbReference>
<dbReference type="GO" id="GO:0005886">
    <property type="term" value="C:plasma membrane"/>
    <property type="evidence" value="ECO:0007669"/>
    <property type="project" value="UniProtKB-SubCell"/>
</dbReference>
<dbReference type="GO" id="GO:0015105">
    <property type="term" value="F:arsenite transmembrane transporter activity"/>
    <property type="evidence" value="ECO:0007669"/>
    <property type="project" value="InterPro"/>
</dbReference>
<dbReference type="GO" id="GO:0046685">
    <property type="term" value="P:response to arsenic-containing substance"/>
    <property type="evidence" value="ECO:0007669"/>
    <property type="project" value="UniProtKB-KW"/>
</dbReference>
<dbReference type="CDD" id="cd01118">
    <property type="entry name" value="ArsB_permease"/>
    <property type="match status" value="1"/>
</dbReference>
<dbReference type="InterPro" id="IPR000802">
    <property type="entry name" value="Arsenical_pump_ArsB"/>
</dbReference>
<dbReference type="NCBIfam" id="TIGR00935">
    <property type="entry name" value="2a45"/>
    <property type="match status" value="1"/>
</dbReference>
<dbReference type="NCBIfam" id="NF033877">
    <property type="entry name" value="arsB_Sta_pI258"/>
    <property type="match status" value="1"/>
</dbReference>
<dbReference type="NCBIfam" id="NF011980">
    <property type="entry name" value="PRK15445.1"/>
    <property type="match status" value="1"/>
</dbReference>
<dbReference type="PANTHER" id="PTHR43302">
    <property type="entry name" value="TRANSPORTER ARSB-RELATED"/>
    <property type="match status" value="1"/>
</dbReference>
<dbReference type="PANTHER" id="PTHR43302:SF5">
    <property type="entry name" value="TRANSPORTER ARSB-RELATED"/>
    <property type="match status" value="1"/>
</dbReference>
<dbReference type="Pfam" id="PF02040">
    <property type="entry name" value="ArsB"/>
    <property type="match status" value="1"/>
</dbReference>
<dbReference type="PRINTS" id="PR00758">
    <property type="entry name" value="ARSENICPUMP"/>
</dbReference>
<feature type="chain" id="PRO_0000201475" description="Arsenical pump membrane protein">
    <location>
        <begin position="1"/>
        <end position="429"/>
    </location>
</feature>
<feature type="transmembrane region" description="Helical" evidence="1">
    <location>
        <begin position="3"/>
        <end position="23"/>
    </location>
</feature>
<feature type="transmembrane region" description="Helical" evidence="1">
    <location>
        <begin position="25"/>
        <end position="45"/>
    </location>
</feature>
<feature type="transmembrane region" description="Helical" evidence="1">
    <location>
        <begin position="50"/>
        <end position="70"/>
    </location>
</feature>
<feature type="transmembrane region" description="Helical" evidence="1">
    <location>
        <begin position="98"/>
        <end position="118"/>
    </location>
</feature>
<feature type="transmembrane region" description="Helical" evidence="1">
    <location>
        <begin position="136"/>
        <end position="156"/>
    </location>
</feature>
<feature type="transmembrane region" description="Helical" evidence="1">
    <location>
        <begin position="179"/>
        <end position="199"/>
    </location>
</feature>
<feature type="transmembrane region" description="Helical" evidence="1">
    <location>
        <begin position="222"/>
        <end position="242"/>
    </location>
</feature>
<feature type="transmembrane region" description="Helical" evidence="1">
    <location>
        <begin position="244"/>
        <end position="264"/>
    </location>
</feature>
<feature type="transmembrane region" description="Helical" evidence="1">
    <location>
        <begin position="275"/>
        <end position="295"/>
    </location>
</feature>
<feature type="transmembrane region" description="Helical" evidence="1">
    <location>
        <begin position="316"/>
        <end position="336"/>
    </location>
</feature>
<feature type="transmembrane region" description="Helical" evidence="1">
    <location>
        <begin position="372"/>
        <end position="392"/>
    </location>
</feature>
<feature type="transmembrane region" description="Helical" evidence="1">
    <location>
        <begin position="408"/>
        <end position="428"/>
    </location>
</feature>
<keyword id="KW-0059">Arsenical resistance</keyword>
<keyword id="KW-1003">Cell membrane</keyword>
<keyword id="KW-0472">Membrane</keyword>
<keyword id="KW-0614">Plasmid</keyword>
<keyword id="KW-0812">Transmembrane</keyword>
<keyword id="KW-1133">Transmembrane helix</keyword>
<keyword id="KW-0813">Transport</keyword>